<reference key="1">
    <citation type="journal article" date="1989" name="Virus Res.">
        <title>Identification and nucleotide sequence of the early region 1 from canine adenovirus types 1 and 2.</title>
        <authorList>
            <person name="Spibey N."/>
            <person name="McClory R.S."/>
            <person name="Cavanagh H.M.A."/>
        </authorList>
    </citation>
    <scope>NUCLEOTIDE SEQUENCE [GENOMIC DNA]</scope>
</reference>
<evidence type="ECO:0000256" key="1">
    <source>
        <dbReference type="SAM" id="MobiDB-lite"/>
    </source>
</evidence>
<evidence type="ECO:0000305" key="2"/>
<keyword id="KW-0244">Early protein</keyword>
<keyword id="KW-0945">Host-virus interaction</keyword>
<keyword id="KW-1081">Inhibition of host apoptosis by viral BCL2-like protein</keyword>
<keyword id="KW-1119">Modulation of host cell apoptosis by virus</keyword>
<comment type="similarity">
    <text evidence="2">Belongs to the adenoviridae E1B 19 kDa protein family.</text>
</comment>
<dbReference type="PIR" id="C60010">
    <property type="entry name" value="C60010"/>
</dbReference>
<dbReference type="GO" id="GO:0033668">
    <property type="term" value="P:symbiont-mediated suppression of host apoptosis"/>
    <property type="evidence" value="ECO:0007669"/>
    <property type="project" value="UniProtKB-KW"/>
</dbReference>
<dbReference type="InterPro" id="IPR002924">
    <property type="entry name" value="Adenovir_t-Ag_E1B_19kDa"/>
</dbReference>
<dbReference type="InterPro" id="IPR002475">
    <property type="entry name" value="Bcl2-like"/>
</dbReference>
<dbReference type="Pfam" id="PF01691">
    <property type="entry name" value="Adeno_E1B_19K"/>
    <property type="match status" value="1"/>
</dbReference>
<dbReference type="PROSITE" id="PS50062">
    <property type="entry name" value="BCL2_FAMILY"/>
    <property type="match status" value="1"/>
</dbReference>
<organism>
    <name type="scientific">Canine adenovirus serotype 1 (strain Glaxo)</name>
    <name type="common">CAdV-1</name>
    <name type="synonym">Canine adenovirus 1 (strain Glaxo)</name>
    <dbReference type="NCBI Taxonomy" id="10513"/>
    <lineage>
        <taxon>Viruses</taxon>
        <taxon>Varidnaviria</taxon>
        <taxon>Bamfordvirae</taxon>
        <taxon>Preplasmiviricota</taxon>
        <taxon>Tectiliviricetes</taxon>
        <taxon>Rowavirales</taxon>
        <taxon>Adenoviridae</taxon>
        <taxon>Mastadenovirus</taxon>
        <taxon>Canine mastadenovirus A</taxon>
    </lineage>
</organism>
<protein>
    <recommendedName>
        <fullName>E1B protein, small T-antigen</fullName>
    </recommendedName>
    <alternativeName>
        <fullName>E1B 19 kDa protein</fullName>
        <shortName>E1B-19K</shortName>
    </alternativeName>
</protein>
<feature type="chain" id="PRO_0000221718" description="E1B protein, small T-antigen">
    <location>
        <begin position="1"/>
        <end position="169"/>
    </location>
</feature>
<feature type="region of interest" description="Disordered" evidence="1">
    <location>
        <begin position="147"/>
        <end position="169"/>
    </location>
</feature>
<feature type="compositionally biased region" description="Basic and acidic residues" evidence="1">
    <location>
        <begin position="156"/>
        <end position="169"/>
    </location>
</feature>
<organismHost>
    <name type="scientific">Canis lupus familiaris</name>
    <name type="common">Dog</name>
    <name type="synonym">Canis familiaris</name>
    <dbReference type="NCBI Taxonomy" id="9615"/>
</organismHost>
<name>E1BS_ADECG</name>
<proteinExistence type="inferred from homology"/>
<sequence length="169" mass="19364">MDPLKICENYLTFRSIIKGSTFSPGVFRRWRFHGLADVVGNIVEREEGRFWEIVPETHTLWAVFRGGFTVAPFTEILTSLQLENRGRQLAFLAFLSFLLRNWPSDSVVSEDARLDLVCAPAWSRIQIWSQAARLINDLPESVFEGQGSVVEEEQGEEHLARDSDDPFFD</sequence>
<accession>P35984</accession>